<protein>
    <recommendedName>
        <fullName evidence="1">Large ribosomal subunit protein uL30</fullName>
    </recommendedName>
    <alternativeName>
        <fullName evidence="2">50S ribosomal protein L30</fullName>
    </alternativeName>
</protein>
<organism>
    <name type="scientific">Acholeplasma laidlawii (strain PG-8A)</name>
    <dbReference type="NCBI Taxonomy" id="441768"/>
    <lineage>
        <taxon>Bacteria</taxon>
        <taxon>Bacillati</taxon>
        <taxon>Mycoplasmatota</taxon>
        <taxon>Mollicutes</taxon>
        <taxon>Acholeplasmatales</taxon>
        <taxon>Acholeplasmataceae</taxon>
        <taxon>Acholeplasma</taxon>
    </lineage>
</organism>
<accession>A9NEF1</accession>
<comment type="subunit">
    <text evidence="1">Part of the 50S ribosomal subunit.</text>
</comment>
<comment type="similarity">
    <text evidence="1">Belongs to the universal ribosomal protein uL30 family.</text>
</comment>
<keyword id="KW-1185">Reference proteome</keyword>
<keyword id="KW-0687">Ribonucleoprotein</keyword>
<keyword id="KW-0689">Ribosomal protein</keyword>
<feature type="chain" id="PRO_0000347068" description="Large ribosomal subunit protein uL30">
    <location>
        <begin position="1"/>
        <end position="57"/>
    </location>
</feature>
<dbReference type="EMBL" id="CP000896">
    <property type="protein sequence ID" value="ABX80731.1"/>
    <property type="molecule type" value="Genomic_DNA"/>
</dbReference>
<dbReference type="RefSeq" id="WP_012242062.1">
    <property type="nucleotide sequence ID" value="NC_010163.1"/>
</dbReference>
<dbReference type="SMR" id="A9NEF1"/>
<dbReference type="STRING" id="441768.ACL_0105"/>
<dbReference type="GeneID" id="41338307"/>
<dbReference type="KEGG" id="acl:ACL_0105"/>
<dbReference type="eggNOG" id="COG1841">
    <property type="taxonomic scope" value="Bacteria"/>
</dbReference>
<dbReference type="HOGENOM" id="CLU_131047_2_1_14"/>
<dbReference type="OrthoDB" id="9812790at2"/>
<dbReference type="Proteomes" id="UP000008558">
    <property type="component" value="Chromosome"/>
</dbReference>
<dbReference type="GO" id="GO:0022625">
    <property type="term" value="C:cytosolic large ribosomal subunit"/>
    <property type="evidence" value="ECO:0007669"/>
    <property type="project" value="TreeGrafter"/>
</dbReference>
<dbReference type="GO" id="GO:0003735">
    <property type="term" value="F:structural constituent of ribosome"/>
    <property type="evidence" value="ECO:0007669"/>
    <property type="project" value="InterPro"/>
</dbReference>
<dbReference type="GO" id="GO:0006412">
    <property type="term" value="P:translation"/>
    <property type="evidence" value="ECO:0007669"/>
    <property type="project" value="InterPro"/>
</dbReference>
<dbReference type="CDD" id="cd01658">
    <property type="entry name" value="Ribosomal_L30"/>
    <property type="match status" value="1"/>
</dbReference>
<dbReference type="Gene3D" id="3.30.1390.20">
    <property type="entry name" value="Ribosomal protein L30, ferredoxin-like fold domain"/>
    <property type="match status" value="1"/>
</dbReference>
<dbReference type="HAMAP" id="MF_01371_B">
    <property type="entry name" value="Ribosomal_uL30_B"/>
    <property type="match status" value="1"/>
</dbReference>
<dbReference type="InterPro" id="IPR036919">
    <property type="entry name" value="Ribo_uL30_ferredoxin-like_sf"/>
</dbReference>
<dbReference type="InterPro" id="IPR005996">
    <property type="entry name" value="Ribosomal_uL30_bac-type"/>
</dbReference>
<dbReference type="InterPro" id="IPR016082">
    <property type="entry name" value="Ribosomal_uL30_ferredoxin-like"/>
</dbReference>
<dbReference type="NCBIfam" id="TIGR01308">
    <property type="entry name" value="rpmD_bact"/>
    <property type="match status" value="1"/>
</dbReference>
<dbReference type="PANTHER" id="PTHR15892:SF2">
    <property type="entry name" value="LARGE RIBOSOMAL SUBUNIT PROTEIN UL30M"/>
    <property type="match status" value="1"/>
</dbReference>
<dbReference type="PANTHER" id="PTHR15892">
    <property type="entry name" value="MITOCHONDRIAL RIBOSOMAL PROTEIN L30"/>
    <property type="match status" value="1"/>
</dbReference>
<dbReference type="Pfam" id="PF00327">
    <property type="entry name" value="Ribosomal_L30"/>
    <property type="match status" value="1"/>
</dbReference>
<dbReference type="PIRSF" id="PIRSF002211">
    <property type="entry name" value="Ribosomal_L30_bac-type"/>
    <property type="match status" value="1"/>
</dbReference>
<dbReference type="SUPFAM" id="SSF55129">
    <property type="entry name" value="Ribosomal protein L30p/L7e"/>
    <property type="match status" value="1"/>
</dbReference>
<evidence type="ECO:0000255" key="1">
    <source>
        <dbReference type="HAMAP-Rule" id="MF_01371"/>
    </source>
</evidence>
<evidence type="ECO:0000305" key="2"/>
<proteinExistence type="inferred from homology"/>
<name>RL30_ACHLI</name>
<sequence>MLKITLKKSLIGRRPNQVKTAHALGLRKIGQSVSKVENDAINGMINTIGHLVVVEKE</sequence>
<reference key="1">
    <citation type="journal article" date="2011" name="J. Bacteriol.">
        <title>Complete genome and proteome of Acholeplasma laidlawii.</title>
        <authorList>
            <person name="Lazarev V.N."/>
            <person name="Levitskii S.A."/>
            <person name="Basovskii Y.I."/>
            <person name="Chukin M.M."/>
            <person name="Akopian T.A."/>
            <person name="Vereshchagin V.V."/>
            <person name="Kostrjukova E.S."/>
            <person name="Kovaleva G.Y."/>
            <person name="Kazanov M.D."/>
            <person name="Malko D.B."/>
            <person name="Vitreschak A.G."/>
            <person name="Sernova N.V."/>
            <person name="Gelfand M.S."/>
            <person name="Demina I.A."/>
            <person name="Serebryakova M.V."/>
            <person name="Galyamina M.A."/>
            <person name="Vtyurin N.N."/>
            <person name="Rogov S.I."/>
            <person name="Alexeev D.G."/>
            <person name="Ladygina V.G."/>
            <person name="Govorun V.M."/>
        </authorList>
    </citation>
    <scope>NUCLEOTIDE SEQUENCE [LARGE SCALE GENOMIC DNA]</scope>
    <source>
        <strain>PG-8A</strain>
    </source>
</reference>
<gene>
    <name evidence="1" type="primary">rpmD</name>
    <name type="ordered locus">ACL_0105</name>
</gene>